<accession>Q5F9F6</accession>
<comment type="function">
    <text evidence="1">Catalyzes the phosphorylation of the position 2 hydroxy group of 4-diphosphocytidyl-2C-methyl-D-erythritol.</text>
</comment>
<comment type="catalytic activity">
    <reaction evidence="1">
        <text>4-CDP-2-C-methyl-D-erythritol + ATP = 4-CDP-2-C-methyl-D-erythritol 2-phosphate + ADP + H(+)</text>
        <dbReference type="Rhea" id="RHEA:18437"/>
        <dbReference type="ChEBI" id="CHEBI:15378"/>
        <dbReference type="ChEBI" id="CHEBI:30616"/>
        <dbReference type="ChEBI" id="CHEBI:57823"/>
        <dbReference type="ChEBI" id="CHEBI:57919"/>
        <dbReference type="ChEBI" id="CHEBI:456216"/>
        <dbReference type="EC" id="2.7.1.148"/>
    </reaction>
</comment>
<comment type="pathway">
    <text evidence="1">Isoprenoid biosynthesis; isopentenyl diphosphate biosynthesis via DXP pathway; isopentenyl diphosphate from 1-deoxy-D-xylulose 5-phosphate: step 3/6.</text>
</comment>
<comment type="similarity">
    <text evidence="1">Belongs to the GHMP kinase family. IspE subfamily.</text>
</comment>
<evidence type="ECO:0000255" key="1">
    <source>
        <dbReference type="HAMAP-Rule" id="MF_00061"/>
    </source>
</evidence>
<dbReference type="EC" id="2.7.1.148" evidence="1"/>
<dbReference type="EMBL" id="AE004969">
    <property type="protein sequence ID" value="AAW89181.1"/>
    <property type="molecule type" value="Genomic_DNA"/>
</dbReference>
<dbReference type="RefSeq" id="WP_010951042.1">
    <property type="nucleotide sequence ID" value="NC_002946.2"/>
</dbReference>
<dbReference type="RefSeq" id="YP_207593.1">
    <property type="nucleotide sequence ID" value="NC_002946.2"/>
</dbReference>
<dbReference type="SMR" id="Q5F9F6"/>
<dbReference type="STRING" id="242231.NGO_0440"/>
<dbReference type="KEGG" id="ngo:NGO_0440"/>
<dbReference type="PATRIC" id="fig|242231.10.peg.527"/>
<dbReference type="HOGENOM" id="CLU_053057_3_0_4"/>
<dbReference type="UniPathway" id="UPA00056">
    <property type="reaction ID" value="UER00094"/>
</dbReference>
<dbReference type="Proteomes" id="UP000000535">
    <property type="component" value="Chromosome"/>
</dbReference>
<dbReference type="GO" id="GO:0050515">
    <property type="term" value="F:4-(cytidine 5'-diphospho)-2-C-methyl-D-erythritol kinase activity"/>
    <property type="evidence" value="ECO:0007669"/>
    <property type="project" value="UniProtKB-UniRule"/>
</dbReference>
<dbReference type="GO" id="GO:0005524">
    <property type="term" value="F:ATP binding"/>
    <property type="evidence" value="ECO:0007669"/>
    <property type="project" value="UniProtKB-UniRule"/>
</dbReference>
<dbReference type="GO" id="GO:0019288">
    <property type="term" value="P:isopentenyl diphosphate biosynthetic process, methylerythritol 4-phosphate pathway"/>
    <property type="evidence" value="ECO:0007669"/>
    <property type="project" value="UniProtKB-UniRule"/>
</dbReference>
<dbReference type="GO" id="GO:0016114">
    <property type="term" value="P:terpenoid biosynthetic process"/>
    <property type="evidence" value="ECO:0007669"/>
    <property type="project" value="InterPro"/>
</dbReference>
<dbReference type="Gene3D" id="3.30.230.10">
    <property type="match status" value="1"/>
</dbReference>
<dbReference type="Gene3D" id="3.30.70.890">
    <property type="entry name" value="GHMP kinase, C-terminal domain"/>
    <property type="match status" value="1"/>
</dbReference>
<dbReference type="HAMAP" id="MF_00061">
    <property type="entry name" value="IspE"/>
    <property type="match status" value="1"/>
</dbReference>
<dbReference type="InterPro" id="IPR013750">
    <property type="entry name" value="GHMP_kinase_C_dom"/>
</dbReference>
<dbReference type="InterPro" id="IPR036554">
    <property type="entry name" value="GHMP_kinase_C_sf"/>
</dbReference>
<dbReference type="InterPro" id="IPR006204">
    <property type="entry name" value="GHMP_kinase_N_dom"/>
</dbReference>
<dbReference type="InterPro" id="IPR004424">
    <property type="entry name" value="IspE"/>
</dbReference>
<dbReference type="InterPro" id="IPR020568">
    <property type="entry name" value="Ribosomal_Su5_D2-typ_SF"/>
</dbReference>
<dbReference type="InterPro" id="IPR014721">
    <property type="entry name" value="Ribsml_uS5_D2-typ_fold_subgr"/>
</dbReference>
<dbReference type="NCBIfam" id="TIGR00154">
    <property type="entry name" value="ispE"/>
    <property type="match status" value="1"/>
</dbReference>
<dbReference type="PANTHER" id="PTHR43527">
    <property type="entry name" value="4-DIPHOSPHOCYTIDYL-2-C-METHYL-D-ERYTHRITOL KINASE, CHLOROPLASTIC"/>
    <property type="match status" value="1"/>
</dbReference>
<dbReference type="PANTHER" id="PTHR43527:SF2">
    <property type="entry name" value="4-DIPHOSPHOCYTIDYL-2-C-METHYL-D-ERYTHRITOL KINASE, CHLOROPLASTIC"/>
    <property type="match status" value="1"/>
</dbReference>
<dbReference type="Pfam" id="PF08544">
    <property type="entry name" value="GHMP_kinases_C"/>
    <property type="match status" value="1"/>
</dbReference>
<dbReference type="Pfam" id="PF00288">
    <property type="entry name" value="GHMP_kinases_N"/>
    <property type="match status" value="1"/>
</dbReference>
<dbReference type="PIRSF" id="PIRSF010376">
    <property type="entry name" value="IspE"/>
    <property type="match status" value="1"/>
</dbReference>
<dbReference type="SUPFAM" id="SSF55060">
    <property type="entry name" value="GHMP Kinase, C-terminal domain"/>
    <property type="match status" value="1"/>
</dbReference>
<dbReference type="SUPFAM" id="SSF54211">
    <property type="entry name" value="Ribosomal protein S5 domain 2-like"/>
    <property type="match status" value="1"/>
</dbReference>
<reference key="1">
    <citation type="submission" date="2003-03" db="EMBL/GenBank/DDBJ databases">
        <title>The complete genome sequence of Neisseria gonorrhoeae.</title>
        <authorList>
            <person name="Lewis L.A."/>
            <person name="Gillaspy A.F."/>
            <person name="McLaughlin R.E."/>
            <person name="Gipson M."/>
            <person name="Ducey T.F."/>
            <person name="Ownbey T."/>
            <person name="Hartman K."/>
            <person name="Nydick C."/>
            <person name="Carson M.B."/>
            <person name="Vaughn J."/>
            <person name="Thomson C."/>
            <person name="Song L."/>
            <person name="Lin S."/>
            <person name="Yuan X."/>
            <person name="Najar F."/>
            <person name="Zhan M."/>
            <person name="Ren Q."/>
            <person name="Zhu H."/>
            <person name="Qi S."/>
            <person name="Kenton S.M."/>
            <person name="Lai H."/>
            <person name="White J.D."/>
            <person name="Clifton S."/>
            <person name="Roe B.A."/>
            <person name="Dyer D.W."/>
        </authorList>
    </citation>
    <scope>NUCLEOTIDE SEQUENCE [LARGE SCALE GENOMIC DNA]</scope>
    <source>
        <strain>ATCC 700825 / FA 1090</strain>
    </source>
</reference>
<gene>
    <name evidence="1" type="primary">ispE</name>
    <name type="ordered locus">NGO_0440</name>
</gene>
<protein>
    <recommendedName>
        <fullName evidence="1">4-diphosphocytidyl-2-C-methyl-D-erythritol kinase</fullName>
        <shortName evidence="1">CMK</shortName>
        <ecNumber evidence="1">2.7.1.148</ecNumber>
    </recommendedName>
    <alternativeName>
        <fullName evidence="1">4-(cytidine-5'-diphospho)-2-C-methyl-D-erythritol kinase</fullName>
    </alternativeName>
</protein>
<organism>
    <name type="scientific">Neisseria gonorrhoeae (strain ATCC 700825 / FA 1090)</name>
    <dbReference type="NCBI Taxonomy" id="242231"/>
    <lineage>
        <taxon>Bacteria</taxon>
        <taxon>Pseudomonadati</taxon>
        <taxon>Pseudomonadota</taxon>
        <taxon>Betaproteobacteria</taxon>
        <taxon>Neisseriales</taxon>
        <taxon>Neisseriaceae</taxon>
        <taxon>Neisseria</taxon>
    </lineage>
</organism>
<name>ISPE_NEIG1</name>
<feature type="chain" id="PRO_0000235105" description="4-diphosphocytidyl-2-C-methyl-D-erythritol kinase">
    <location>
        <begin position="1"/>
        <end position="281"/>
    </location>
</feature>
<feature type="active site" evidence="1">
    <location>
        <position position="15"/>
    </location>
</feature>
<feature type="active site" evidence="1">
    <location>
        <position position="140"/>
    </location>
</feature>
<feature type="binding site" evidence="1">
    <location>
        <begin position="98"/>
        <end position="108"/>
    </location>
    <ligand>
        <name>ATP</name>
        <dbReference type="ChEBI" id="CHEBI:30616"/>
    </ligand>
</feature>
<sequence>MNIADGRQAFPAPAKLNLDLRITGRREDGYHNIESIFCLIDLQDTVYLKPRDDGKIILHNPVGGIPQEADLSYRAASLLQKYARNLAGVEIWLDKKIPTGAGLGGGSSDAATVLLVLNRWWQCGLTQWQLIDLGAALGADVPFFIFGKNAFASGIGKKLIGMDIPKQWYVIVKPPVHVSTAKIFTYEGLTRDSASSIMPTFQNLQPFRNDMQAVVFKEYPEVWKAYSELSKYGSAMMTGSGACIFAAFQARNSAYNIYRQVSGLYEAYLAEGLSKHPLLSV</sequence>
<proteinExistence type="inferred from homology"/>
<keyword id="KW-0067">ATP-binding</keyword>
<keyword id="KW-0414">Isoprene biosynthesis</keyword>
<keyword id="KW-0418">Kinase</keyword>
<keyword id="KW-0547">Nucleotide-binding</keyword>
<keyword id="KW-1185">Reference proteome</keyword>
<keyword id="KW-0808">Transferase</keyword>